<dbReference type="EC" id="3.1.26.4" evidence="1"/>
<dbReference type="EMBL" id="AP009324">
    <property type="protein sequence ID" value="BAF78014.1"/>
    <property type="molecule type" value="Genomic_DNA"/>
</dbReference>
<dbReference type="RefSeq" id="WP_001284282.1">
    <property type="nucleotide sequence ID" value="NC_009782.1"/>
</dbReference>
<dbReference type="SMR" id="A7X163"/>
<dbReference type="KEGG" id="saw:SAHV_1131"/>
<dbReference type="HOGENOM" id="CLU_059546_1_0_9"/>
<dbReference type="GO" id="GO:0005737">
    <property type="term" value="C:cytoplasm"/>
    <property type="evidence" value="ECO:0007669"/>
    <property type="project" value="UniProtKB-SubCell"/>
</dbReference>
<dbReference type="GO" id="GO:0032299">
    <property type="term" value="C:ribonuclease H2 complex"/>
    <property type="evidence" value="ECO:0007669"/>
    <property type="project" value="TreeGrafter"/>
</dbReference>
<dbReference type="GO" id="GO:0000287">
    <property type="term" value="F:magnesium ion binding"/>
    <property type="evidence" value="ECO:0007669"/>
    <property type="project" value="UniProtKB-UniRule"/>
</dbReference>
<dbReference type="GO" id="GO:0003723">
    <property type="term" value="F:RNA binding"/>
    <property type="evidence" value="ECO:0007669"/>
    <property type="project" value="InterPro"/>
</dbReference>
<dbReference type="GO" id="GO:0004523">
    <property type="term" value="F:RNA-DNA hybrid ribonuclease activity"/>
    <property type="evidence" value="ECO:0007669"/>
    <property type="project" value="UniProtKB-UniRule"/>
</dbReference>
<dbReference type="GO" id="GO:0043137">
    <property type="term" value="P:DNA replication, removal of RNA primer"/>
    <property type="evidence" value="ECO:0007669"/>
    <property type="project" value="TreeGrafter"/>
</dbReference>
<dbReference type="GO" id="GO:0006298">
    <property type="term" value="P:mismatch repair"/>
    <property type="evidence" value="ECO:0007669"/>
    <property type="project" value="TreeGrafter"/>
</dbReference>
<dbReference type="CDD" id="cd06590">
    <property type="entry name" value="RNase_HII_bacteria_HIII_like"/>
    <property type="match status" value="1"/>
</dbReference>
<dbReference type="CDD" id="cd14796">
    <property type="entry name" value="RNAse_HIII_N"/>
    <property type="match status" value="1"/>
</dbReference>
<dbReference type="FunFam" id="3.30.420.10:FF:000047">
    <property type="entry name" value="Ribonuclease HIII"/>
    <property type="match status" value="1"/>
</dbReference>
<dbReference type="Gene3D" id="3.30.420.10">
    <property type="entry name" value="Ribonuclease H-like superfamily/Ribonuclease H"/>
    <property type="match status" value="1"/>
</dbReference>
<dbReference type="Gene3D" id="3.30.310.10">
    <property type="entry name" value="TATA-Binding Protein"/>
    <property type="match status" value="1"/>
</dbReference>
<dbReference type="HAMAP" id="MF_00053">
    <property type="entry name" value="RNase_HIII"/>
    <property type="match status" value="1"/>
</dbReference>
<dbReference type="InterPro" id="IPR001352">
    <property type="entry name" value="RNase_HII/HIII"/>
</dbReference>
<dbReference type="InterPro" id="IPR024567">
    <property type="entry name" value="RNase_HII/HIII_dom"/>
</dbReference>
<dbReference type="InterPro" id="IPR004641">
    <property type="entry name" value="RNase_HIII"/>
</dbReference>
<dbReference type="InterPro" id="IPR024568">
    <property type="entry name" value="RNase_HIII_N"/>
</dbReference>
<dbReference type="InterPro" id="IPR012337">
    <property type="entry name" value="RNaseH-like_sf"/>
</dbReference>
<dbReference type="InterPro" id="IPR036397">
    <property type="entry name" value="RNaseH_sf"/>
</dbReference>
<dbReference type="InterPro" id="IPR012295">
    <property type="entry name" value="TBP_dom_sf"/>
</dbReference>
<dbReference type="NCBIfam" id="TIGR00716">
    <property type="entry name" value="rnhC"/>
    <property type="match status" value="1"/>
</dbReference>
<dbReference type="PANTHER" id="PTHR10954:SF23">
    <property type="entry name" value="RIBONUCLEASE"/>
    <property type="match status" value="1"/>
</dbReference>
<dbReference type="PANTHER" id="PTHR10954">
    <property type="entry name" value="RIBONUCLEASE H2 SUBUNIT A"/>
    <property type="match status" value="1"/>
</dbReference>
<dbReference type="Pfam" id="PF11858">
    <property type="entry name" value="DUF3378"/>
    <property type="match status" value="1"/>
</dbReference>
<dbReference type="Pfam" id="PF01351">
    <property type="entry name" value="RNase_HII"/>
    <property type="match status" value="1"/>
</dbReference>
<dbReference type="PIRSF" id="PIRSF037748">
    <property type="entry name" value="RnhC"/>
    <property type="match status" value="1"/>
</dbReference>
<dbReference type="SUPFAM" id="SSF53098">
    <property type="entry name" value="Ribonuclease H-like"/>
    <property type="match status" value="1"/>
</dbReference>
<dbReference type="PROSITE" id="PS51975">
    <property type="entry name" value="RNASE_H_2"/>
    <property type="match status" value="1"/>
</dbReference>
<name>RNH3_STAA1</name>
<evidence type="ECO:0000255" key="1">
    <source>
        <dbReference type="HAMAP-Rule" id="MF_00053"/>
    </source>
</evidence>
<evidence type="ECO:0000255" key="2">
    <source>
        <dbReference type="PROSITE-ProRule" id="PRU01319"/>
    </source>
</evidence>
<keyword id="KW-0963">Cytoplasm</keyword>
<keyword id="KW-0255">Endonuclease</keyword>
<keyword id="KW-0378">Hydrolase</keyword>
<keyword id="KW-0460">Magnesium</keyword>
<keyword id="KW-0479">Metal-binding</keyword>
<keyword id="KW-0540">Nuclease</keyword>
<reference key="1">
    <citation type="journal article" date="2008" name="Antimicrob. Agents Chemother.">
        <title>Mutated response regulator graR is responsible for phenotypic conversion of Staphylococcus aureus from heterogeneous vancomycin-intermediate resistance to vancomycin-intermediate resistance.</title>
        <authorList>
            <person name="Neoh H.-M."/>
            <person name="Cui L."/>
            <person name="Yuzawa H."/>
            <person name="Takeuchi F."/>
            <person name="Matsuo M."/>
            <person name="Hiramatsu K."/>
        </authorList>
    </citation>
    <scope>NUCLEOTIDE SEQUENCE [LARGE SCALE GENOMIC DNA]</scope>
    <source>
        <strain>Mu3 / ATCC 700698</strain>
    </source>
</reference>
<proteinExistence type="inferred from homology"/>
<organism>
    <name type="scientific">Staphylococcus aureus (strain Mu3 / ATCC 700698)</name>
    <dbReference type="NCBI Taxonomy" id="418127"/>
    <lineage>
        <taxon>Bacteria</taxon>
        <taxon>Bacillati</taxon>
        <taxon>Bacillota</taxon>
        <taxon>Bacilli</taxon>
        <taxon>Bacillales</taxon>
        <taxon>Staphylococcaceae</taxon>
        <taxon>Staphylococcus</taxon>
    </lineage>
</organism>
<comment type="function">
    <text evidence="1">Endonuclease that specifically degrades the RNA of RNA-DNA hybrids.</text>
</comment>
<comment type="catalytic activity">
    <reaction evidence="1">
        <text>Endonucleolytic cleavage to 5'-phosphomonoester.</text>
        <dbReference type="EC" id="3.1.26.4"/>
    </reaction>
</comment>
<comment type="cofactor">
    <cofactor evidence="1">
        <name>Mn(2+)</name>
        <dbReference type="ChEBI" id="CHEBI:29035"/>
    </cofactor>
    <cofactor evidence="1">
        <name>Mg(2+)</name>
        <dbReference type="ChEBI" id="CHEBI:18420"/>
    </cofactor>
    <text evidence="1">Manganese or magnesium. Binds 1 divalent metal ion per monomer in the absence of substrate. May bind a second metal ion after substrate binding.</text>
</comment>
<comment type="subcellular location">
    <subcellularLocation>
        <location evidence="1">Cytoplasm</location>
    </subcellularLocation>
</comment>
<comment type="similarity">
    <text evidence="1">Belongs to the RNase HII family. RnhC subfamily.</text>
</comment>
<sequence length="312" mass="35055">MANIVFKLSDKDITTLMSRITFDTENLPQGMKARAKYQNTTVNIYQSGKVMFQGNHAEAVSKELLPQHSQLNTNKTKKKNMANSSLEQTLMYDQFNCIGSDEAGSGDYFGPLTVCAAFVTKEHVPILKTLGVDDSKKLTDTKIVELAEQLVAFIPHSLLTLHNDKYNIQQAKGWTQVKMKAVLHNEAIKNVLEKIDSSQLDYIVIDQFAKREVYSHYALSDIPLPKKTKFETKGESKSLAIAVASIISRYAFITYMDQISKYINMTIPKGAGAKVDVIAAKIIKKYGLSRLDTISKKHFKNREKAQKILKPL</sequence>
<protein>
    <recommendedName>
        <fullName evidence="1">Ribonuclease HIII</fullName>
        <shortName evidence="1">RNase HIII</shortName>
        <ecNumber evidence="1">3.1.26.4</ecNumber>
    </recommendedName>
</protein>
<accession>A7X163</accession>
<gene>
    <name evidence="1" type="primary">rnhC</name>
    <name type="ordered locus">SAHV_1131</name>
</gene>
<feature type="chain" id="PRO_1000031235" description="Ribonuclease HIII">
    <location>
        <begin position="1"/>
        <end position="312"/>
    </location>
</feature>
<feature type="domain" description="RNase H type-2" evidence="2">
    <location>
        <begin position="95"/>
        <end position="311"/>
    </location>
</feature>
<feature type="binding site" evidence="1">
    <location>
        <position position="101"/>
    </location>
    <ligand>
        <name>a divalent metal cation</name>
        <dbReference type="ChEBI" id="CHEBI:60240"/>
    </ligand>
</feature>
<feature type="binding site" evidence="1">
    <location>
        <position position="102"/>
    </location>
    <ligand>
        <name>a divalent metal cation</name>
        <dbReference type="ChEBI" id="CHEBI:60240"/>
    </ligand>
</feature>
<feature type="binding site" evidence="1">
    <location>
        <position position="206"/>
    </location>
    <ligand>
        <name>a divalent metal cation</name>
        <dbReference type="ChEBI" id="CHEBI:60240"/>
    </ligand>
</feature>